<gene>
    <name evidence="1" type="primary">recO</name>
    <name type="ordered locus">BLA_0825</name>
</gene>
<name>RECO_BIFA0</name>
<organism>
    <name type="scientific">Bifidobacterium animalis subsp. lactis (strain AD011)</name>
    <dbReference type="NCBI Taxonomy" id="442563"/>
    <lineage>
        <taxon>Bacteria</taxon>
        <taxon>Bacillati</taxon>
        <taxon>Actinomycetota</taxon>
        <taxon>Actinomycetes</taxon>
        <taxon>Bifidobacteriales</taxon>
        <taxon>Bifidobacteriaceae</taxon>
        <taxon>Bifidobacterium</taxon>
    </lineage>
</organism>
<comment type="function">
    <text evidence="1">Involved in DNA repair and RecF pathway recombination.</text>
</comment>
<comment type="similarity">
    <text evidence="1">Belongs to the RecO family.</text>
</comment>
<feature type="chain" id="PRO_1000193362" description="DNA repair protein RecO">
    <location>
        <begin position="1"/>
        <end position="239"/>
    </location>
</feature>
<dbReference type="EMBL" id="CP001213">
    <property type="protein sequence ID" value="ACL29117.1"/>
    <property type="molecule type" value="Genomic_DNA"/>
</dbReference>
<dbReference type="RefSeq" id="WP_004218580.1">
    <property type="nucleotide sequence ID" value="NC_011835.1"/>
</dbReference>
<dbReference type="SMR" id="B8DSY8"/>
<dbReference type="STRING" id="442563.BLA_0825"/>
<dbReference type="GeneID" id="29695898"/>
<dbReference type="KEGG" id="bla:BLA_0825"/>
<dbReference type="HOGENOM" id="CLU_066632_1_1_11"/>
<dbReference type="Proteomes" id="UP000002456">
    <property type="component" value="Chromosome"/>
</dbReference>
<dbReference type="GO" id="GO:0043590">
    <property type="term" value="C:bacterial nucleoid"/>
    <property type="evidence" value="ECO:0007669"/>
    <property type="project" value="TreeGrafter"/>
</dbReference>
<dbReference type="GO" id="GO:0006310">
    <property type="term" value="P:DNA recombination"/>
    <property type="evidence" value="ECO:0007669"/>
    <property type="project" value="UniProtKB-UniRule"/>
</dbReference>
<dbReference type="GO" id="GO:0006302">
    <property type="term" value="P:double-strand break repair"/>
    <property type="evidence" value="ECO:0007669"/>
    <property type="project" value="TreeGrafter"/>
</dbReference>
<dbReference type="Gene3D" id="2.40.50.140">
    <property type="entry name" value="Nucleic acid-binding proteins"/>
    <property type="match status" value="1"/>
</dbReference>
<dbReference type="Gene3D" id="1.20.1440.120">
    <property type="entry name" value="Recombination protein O, C-terminal domain"/>
    <property type="match status" value="1"/>
</dbReference>
<dbReference type="HAMAP" id="MF_00201">
    <property type="entry name" value="RecO"/>
    <property type="match status" value="1"/>
</dbReference>
<dbReference type="InterPro" id="IPR037278">
    <property type="entry name" value="ARFGAP/RecO"/>
</dbReference>
<dbReference type="InterPro" id="IPR022572">
    <property type="entry name" value="DNA_rep/recomb_RecO_N"/>
</dbReference>
<dbReference type="InterPro" id="IPR012340">
    <property type="entry name" value="NA-bd_OB-fold"/>
</dbReference>
<dbReference type="InterPro" id="IPR003717">
    <property type="entry name" value="RecO"/>
</dbReference>
<dbReference type="InterPro" id="IPR042242">
    <property type="entry name" value="RecO_C"/>
</dbReference>
<dbReference type="NCBIfam" id="TIGR00613">
    <property type="entry name" value="reco"/>
    <property type="match status" value="1"/>
</dbReference>
<dbReference type="PANTHER" id="PTHR33991">
    <property type="entry name" value="DNA REPAIR PROTEIN RECO"/>
    <property type="match status" value="1"/>
</dbReference>
<dbReference type="PANTHER" id="PTHR33991:SF1">
    <property type="entry name" value="DNA REPAIR PROTEIN RECO"/>
    <property type="match status" value="1"/>
</dbReference>
<dbReference type="Pfam" id="PF02565">
    <property type="entry name" value="RecO_C"/>
    <property type="match status" value="1"/>
</dbReference>
<dbReference type="Pfam" id="PF11967">
    <property type="entry name" value="RecO_N"/>
    <property type="match status" value="1"/>
</dbReference>
<dbReference type="SUPFAM" id="SSF57863">
    <property type="entry name" value="ArfGap/RecO-like zinc finger"/>
    <property type="match status" value="1"/>
</dbReference>
<dbReference type="SUPFAM" id="SSF50249">
    <property type="entry name" value="Nucleic acid-binding proteins"/>
    <property type="match status" value="1"/>
</dbReference>
<keyword id="KW-0227">DNA damage</keyword>
<keyword id="KW-0233">DNA recombination</keyword>
<keyword id="KW-0234">DNA repair</keyword>
<keyword id="KW-1185">Reference proteome</keyword>
<proteinExistence type="inferred from homology"/>
<reference key="1">
    <citation type="journal article" date="2009" name="J. Bacteriol.">
        <title>Genome sequence of the probiotic bacterium Bifidobacterium animalis subsp. lactis AD011.</title>
        <authorList>
            <person name="Kim J.F."/>
            <person name="Jeong H."/>
            <person name="Yu D.S."/>
            <person name="Choi S.-H."/>
            <person name="Hur C.-G."/>
            <person name="Park M.-S."/>
            <person name="Yoon S.H."/>
            <person name="Kim D.-W."/>
            <person name="Ji G.E."/>
            <person name="Park H.-S."/>
            <person name="Oh T.K."/>
        </authorList>
    </citation>
    <scope>NUCLEOTIDE SEQUENCE [LARGE SCALE GENOMIC DNA]</scope>
    <source>
        <strain>AD011</strain>
    </source>
</reference>
<protein>
    <recommendedName>
        <fullName evidence="1">DNA repair protein RecO</fullName>
    </recommendedName>
    <alternativeName>
        <fullName evidence="1">Recombination protein O</fullName>
    </alternativeName>
</protein>
<sequence length="239" mass="26414">MALYRDEAVVLRTAKLGEADRIITLLTRDHGKVRAVAKGVRRTKSRFGARLEPFMRVDLLLGEGRTFDSVRQAESISAYAGGITGDYATYTAASAMCETAADLLPAEHEPAAAQYRLLIAALGALSRHLHDPQAIALSYILRAMSLAGWTIRLDSCVVCGSQDVEFFSASAGGAMCPNDHTPDAVRVPVHVFDQLRALEQGDWPQLDMLQTPDPRCENIVREWAQYYLERPIRSLRLLD</sequence>
<accession>B8DSY8</accession>
<evidence type="ECO:0000255" key="1">
    <source>
        <dbReference type="HAMAP-Rule" id="MF_00201"/>
    </source>
</evidence>